<comment type="function">
    <text evidence="1">Binds as a heterodimer with protein bS6 to the central domain of the 16S rRNA, where it helps stabilize the platform of the 30S subunit.</text>
</comment>
<comment type="subunit">
    <text evidence="1">Part of the 30S ribosomal subunit. Forms a tight heterodimer with protein bS6.</text>
</comment>
<comment type="similarity">
    <text evidence="1">Belongs to the bacterial ribosomal protein bS18 family.</text>
</comment>
<name>RS18_STRGC</name>
<organism>
    <name type="scientific">Streptococcus gordonii (strain Challis / ATCC 35105 / BCRC 15272 / CH1 / DL1 / V288)</name>
    <dbReference type="NCBI Taxonomy" id="467705"/>
    <lineage>
        <taxon>Bacteria</taxon>
        <taxon>Bacillati</taxon>
        <taxon>Bacillota</taxon>
        <taxon>Bacilli</taxon>
        <taxon>Lactobacillales</taxon>
        <taxon>Streptococcaceae</taxon>
        <taxon>Streptococcus</taxon>
    </lineage>
</organism>
<proteinExistence type="inferred from homology"/>
<dbReference type="EMBL" id="CP000725">
    <property type="protein sequence ID" value="ABV09911.1"/>
    <property type="molecule type" value="Genomic_DNA"/>
</dbReference>
<dbReference type="RefSeq" id="WP_000068664.1">
    <property type="nucleotide sequence ID" value="NC_009785.1"/>
</dbReference>
<dbReference type="SMR" id="A8AZD5"/>
<dbReference type="STRING" id="467705.SGO_1879"/>
<dbReference type="GeneID" id="93963800"/>
<dbReference type="KEGG" id="sgo:SGO_1879"/>
<dbReference type="eggNOG" id="COG0238">
    <property type="taxonomic scope" value="Bacteria"/>
</dbReference>
<dbReference type="HOGENOM" id="CLU_148710_2_2_9"/>
<dbReference type="Proteomes" id="UP000001131">
    <property type="component" value="Chromosome"/>
</dbReference>
<dbReference type="GO" id="GO:0022627">
    <property type="term" value="C:cytosolic small ribosomal subunit"/>
    <property type="evidence" value="ECO:0007669"/>
    <property type="project" value="TreeGrafter"/>
</dbReference>
<dbReference type="GO" id="GO:0070181">
    <property type="term" value="F:small ribosomal subunit rRNA binding"/>
    <property type="evidence" value="ECO:0007669"/>
    <property type="project" value="TreeGrafter"/>
</dbReference>
<dbReference type="GO" id="GO:0003735">
    <property type="term" value="F:structural constituent of ribosome"/>
    <property type="evidence" value="ECO:0007669"/>
    <property type="project" value="InterPro"/>
</dbReference>
<dbReference type="GO" id="GO:0006412">
    <property type="term" value="P:translation"/>
    <property type="evidence" value="ECO:0007669"/>
    <property type="project" value="UniProtKB-UniRule"/>
</dbReference>
<dbReference type="FunFam" id="4.10.640.10:FF:000003">
    <property type="entry name" value="30S ribosomal protein S18"/>
    <property type="match status" value="1"/>
</dbReference>
<dbReference type="Gene3D" id="4.10.640.10">
    <property type="entry name" value="Ribosomal protein S18"/>
    <property type="match status" value="1"/>
</dbReference>
<dbReference type="HAMAP" id="MF_00270">
    <property type="entry name" value="Ribosomal_bS18"/>
    <property type="match status" value="1"/>
</dbReference>
<dbReference type="InterPro" id="IPR001648">
    <property type="entry name" value="Ribosomal_bS18"/>
</dbReference>
<dbReference type="InterPro" id="IPR018275">
    <property type="entry name" value="Ribosomal_bS18_CS"/>
</dbReference>
<dbReference type="InterPro" id="IPR036870">
    <property type="entry name" value="Ribosomal_bS18_sf"/>
</dbReference>
<dbReference type="NCBIfam" id="TIGR00165">
    <property type="entry name" value="S18"/>
    <property type="match status" value="1"/>
</dbReference>
<dbReference type="PANTHER" id="PTHR13479">
    <property type="entry name" value="30S RIBOSOMAL PROTEIN S18"/>
    <property type="match status" value="1"/>
</dbReference>
<dbReference type="PANTHER" id="PTHR13479:SF40">
    <property type="entry name" value="SMALL RIBOSOMAL SUBUNIT PROTEIN BS18M"/>
    <property type="match status" value="1"/>
</dbReference>
<dbReference type="Pfam" id="PF01084">
    <property type="entry name" value="Ribosomal_S18"/>
    <property type="match status" value="1"/>
</dbReference>
<dbReference type="PRINTS" id="PR00974">
    <property type="entry name" value="RIBOSOMALS18"/>
</dbReference>
<dbReference type="SUPFAM" id="SSF46911">
    <property type="entry name" value="Ribosomal protein S18"/>
    <property type="match status" value="1"/>
</dbReference>
<dbReference type="PROSITE" id="PS00057">
    <property type="entry name" value="RIBOSOMAL_S18"/>
    <property type="match status" value="1"/>
</dbReference>
<feature type="chain" id="PRO_1000078719" description="Small ribosomal subunit protein bS18">
    <location>
        <begin position="1"/>
        <end position="79"/>
    </location>
</feature>
<accession>A8AZD5</accession>
<reference key="1">
    <citation type="journal article" date="2007" name="J. Bacteriol.">
        <title>Genome-wide transcriptional changes in Streptococcus gordonii in response to competence signaling peptide.</title>
        <authorList>
            <person name="Vickerman M.M."/>
            <person name="Iobst S."/>
            <person name="Jesionowski A.M."/>
            <person name="Gill S.R."/>
        </authorList>
    </citation>
    <scope>NUCLEOTIDE SEQUENCE [LARGE SCALE GENOMIC DNA]</scope>
    <source>
        <strain>Challis / ATCC 35105 / BCRC 15272 / CH1 / DL1 / V288</strain>
    </source>
</reference>
<sequence length="79" mass="9204">MAQQRRGGFKRRKKVDYIAANKIEYVDYKDTELLSRFVSERGKILPRRVTGTSAKNQRKVTTAIKRARVMALMPFVNED</sequence>
<protein>
    <recommendedName>
        <fullName evidence="1">Small ribosomal subunit protein bS18</fullName>
    </recommendedName>
    <alternativeName>
        <fullName evidence="2">30S ribosomal protein S18</fullName>
    </alternativeName>
</protein>
<evidence type="ECO:0000255" key="1">
    <source>
        <dbReference type="HAMAP-Rule" id="MF_00270"/>
    </source>
</evidence>
<evidence type="ECO:0000305" key="2"/>
<keyword id="KW-1185">Reference proteome</keyword>
<keyword id="KW-0687">Ribonucleoprotein</keyword>
<keyword id="KW-0689">Ribosomal protein</keyword>
<keyword id="KW-0694">RNA-binding</keyword>
<keyword id="KW-0699">rRNA-binding</keyword>
<gene>
    <name evidence="1" type="primary">rpsR</name>
    <name type="ordered locus">SGO_1879</name>
</gene>